<feature type="chain" id="PRO_0000382422" description="Polyribonucleotide nucleotidyltransferase">
    <location>
        <begin position="1"/>
        <end position="700"/>
    </location>
</feature>
<feature type="domain" description="KH" evidence="1">
    <location>
        <begin position="551"/>
        <end position="610"/>
    </location>
</feature>
<feature type="domain" description="S1 motif" evidence="1">
    <location>
        <begin position="620"/>
        <end position="688"/>
    </location>
</feature>
<feature type="binding site" evidence="1">
    <location>
        <position position="484"/>
    </location>
    <ligand>
        <name>Mg(2+)</name>
        <dbReference type="ChEBI" id="CHEBI:18420"/>
    </ligand>
</feature>
<feature type="binding site" evidence="1">
    <location>
        <position position="490"/>
    </location>
    <ligand>
        <name>Mg(2+)</name>
        <dbReference type="ChEBI" id="CHEBI:18420"/>
    </ligand>
</feature>
<name>PNP_THEP3</name>
<accession>B0K9P4</accession>
<keyword id="KW-0963">Cytoplasm</keyword>
<keyword id="KW-0460">Magnesium</keyword>
<keyword id="KW-0479">Metal-binding</keyword>
<keyword id="KW-0548">Nucleotidyltransferase</keyword>
<keyword id="KW-1185">Reference proteome</keyword>
<keyword id="KW-0694">RNA-binding</keyword>
<keyword id="KW-0808">Transferase</keyword>
<protein>
    <recommendedName>
        <fullName evidence="1">Polyribonucleotide nucleotidyltransferase</fullName>
        <ecNumber evidence="1">2.7.7.8</ecNumber>
    </recommendedName>
    <alternativeName>
        <fullName evidence="1">Polynucleotide phosphorylase</fullName>
        <shortName evidence="1">PNPase</shortName>
    </alternativeName>
</protein>
<evidence type="ECO:0000255" key="1">
    <source>
        <dbReference type="HAMAP-Rule" id="MF_01595"/>
    </source>
</evidence>
<gene>
    <name evidence="1" type="primary">pnp</name>
    <name type="ordered locus">Teth39_1203</name>
</gene>
<sequence length="700" mass="77496">MEERTFEMELAGRKLLVQIGKVAQQANGAAWVKYGDTVVLVTACASKEPREGIDFFPLTVEYEERLYSVGKIPGGFIKREGKPSEKAILSARLIDRPIRPLFPHGYRNDVQVIATVLSVDPDVQPEIVAMIGSSVALSISDIPFNGPTGAVAVGLVDGQFIINPNHEQREKSLMHLVVSGTKDAIVMVEAGAKEIPEETMLDAIMYAHEYIKQIVEFIEGIVKEVGVPKSEVILHEIDKDLEEKVRAYATEKIYNALRTAEKKERNDNLDKVEQEVLEHFKEEYPDNLADIDEVLYNIMKEQMRKMITEERIRVDGRGLDDIRPIWCEVGVLPRTHGSAIFTRGQTQVLTVATLGALGDIQILDGIGDEEAKRYMHHYNFPPYSVGEVRPLRGPGRREIGHGALAERALEPVIPSEEEFPYTIRLVSEVLSSNGSTSQASVCGSTLALMDAGVPIKAPVAGVAMGLIKEGDVVSVLTDIQGIEDFLGDMDFKVAGTEKGITAIQMDIKIPGIDKEILKMALEKARRGRLYILSKMLEVIKEPRKQLSVYAPRVIRMVVDPEKIREIIGPGGKTISKIIAETGVKIDIEEDGRLYITASDLRSGERAKQMIEAITKDIAVGEIYLGKVLRITPFGAFVEIAPGKEGLVHISKLSKKRVQKVEDVVKVGDDILVKVTDIDKLGRISLSRKDALPDEEEEERN</sequence>
<reference key="1">
    <citation type="submission" date="2008-01" db="EMBL/GenBank/DDBJ databases">
        <title>Complete sequence of Thermoanaerobacter pseudethanolicus 39E.</title>
        <authorList>
            <person name="Copeland A."/>
            <person name="Lucas S."/>
            <person name="Lapidus A."/>
            <person name="Barry K."/>
            <person name="Glavina del Rio T."/>
            <person name="Dalin E."/>
            <person name="Tice H."/>
            <person name="Pitluck S."/>
            <person name="Bruce D."/>
            <person name="Goodwin L."/>
            <person name="Saunders E."/>
            <person name="Brettin T."/>
            <person name="Detter J.C."/>
            <person name="Han C."/>
            <person name="Schmutz J."/>
            <person name="Larimer F."/>
            <person name="Land M."/>
            <person name="Hauser L."/>
            <person name="Kyrpides N."/>
            <person name="Lykidis A."/>
            <person name="Hemme C."/>
            <person name="Fields M.W."/>
            <person name="He Z."/>
            <person name="Zhou J."/>
            <person name="Richardson P."/>
        </authorList>
    </citation>
    <scope>NUCLEOTIDE SEQUENCE [LARGE SCALE GENOMIC DNA]</scope>
    <source>
        <strain>ATCC 33223 / DSM 2355 / 39E</strain>
    </source>
</reference>
<proteinExistence type="inferred from homology"/>
<organism>
    <name type="scientific">Thermoanaerobacter pseudethanolicus (strain ATCC 33223 / 39E)</name>
    <name type="common">Clostridium thermohydrosulfuricum</name>
    <dbReference type="NCBI Taxonomy" id="340099"/>
    <lineage>
        <taxon>Bacteria</taxon>
        <taxon>Bacillati</taxon>
        <taxon>Bacillota</taxon>
        <taxon>Clostridia</taxon>
        <taxon>Thermoanaerobacterales</taxon>
        <taxon>Thermoanaerobacteraceae</taxon>
        <taxon>Thermoanaerobacter</taxon>
    </lineage>
</organism>
<comment type="function">
    <text evidence="1">Involved in mRNA degradation. Catalyzes the phosphorolysis of single-stranded polyribonucleotides processively in the 3'- to 5'-direction.</text>
</comment>
<comment type="catalytic activity">
    <reaction evidence="1">
        <text>RNA(n+1) + phosphate = RNA(n) + a ribonucleoside 5'-diphosphate</text>
        <dbReference type="Rhea" id="RHEA:22096"/>
        <dbReference type="Rhea" id="RHEA-COMP:14527"/>
        <dbReference type="Rhea" id="RHEA-COMP:17342"/>
        <dbReference type="ChEBI" id="CHEBI:43474"/>
        <dbReference type="ChEBI" id="CHEBI:57930"/>
        <dbReference type="ChEBI" id="CHEBI:140395"/>
        <dbReference type="EC" id="2.7.7.8"/>
    </reaction>
</comment>
<comment type="cofactor">
    <cofactor evidence="1">
        <name>Mg(2+)</name>
        <dbReference type="ChEBI" id="CHEBI:18420"/>
    </cofactor>
</comment>
<comment type="subcellular location">
    <subcellularLocation>
        <location evidence="1">Cytoplasm</location>
    </subcellularLocation>
</comment>
<comment type="similarity">
    <text evidence="1">Belongs to the polyribonucleotide nucleotidyltransferase family.</text>
</comment>
<dbReference type="EC" id="2.7.7.8" evidence="1"/>
<dbReference type="EMBL" id="CP000924">
    <property type="protein sequence ID" value="ABY94857.1"/>
    <property type="molecule type" value="Genomic_DNA"/>
</dbReference>
<dbReference type="RefSeq" id="WP_004396216.1">
    <property type="nucleotide sequence ID" value="NC_010321.1"/>
</dbReference>
<dbReference type="SMR" id="B0K9P4"/>
<dbReference type="STRING" id="340099.Teth39_1203"/>
<dbReference type="KEGG" id="tpd:Teth39_1203"/>
<dbReference type="eggNOG" id="COG1185">
    <property type="taxonomic scope" value="Bacteria"/>
</dbReference>
<dbReference type="HOGENOM" id="CLU_004217_2_2_9"/>
<dbReference type="Proteomes" id="UP000002156">
    <property type="component" value="Chromosome"/>
</dbReference>
<dbReference type="GO" id="GO:0005829">
    <property type="term" value="C:cytosol"/>
    <property type="evidence" value="ECO:0007669"/>
    <property type="project" value="TreeGrafter"/>
</dbReference>
<dbReference type="GO" id="GO:0000175">
    <property type="term" value="F:3'-5'-RNA exonuclease activity"/>
    <property type="evidence" value="ECO:0007669"/>
    <property type="project" value="TreeGrafter"/>
</dbReference>
<dbReference type="GO" id="GO:0000287">
    <property type="term" value="F:magnesium ion binding"/>
    <property type="evidence" value="ECO:0007669"/>
    <property type="project" value="UniProtKB-UniRule"/>
</dbReference>
<dbReference type="GO" id="GO:0004654">
    <property type="term" value="F:polyribonucleotide nucleotidyltransferase activity"/>
    <property type="evidence" value="ECO:0007669"/>
    <property type="project" value="UniProtKB-UniRule"/>
</dbReference>
<dbReference type="GO" id="GO:0003723">
    <property type="term" value="F:RNA binding"/>
    <property type="evidence" value="ECO:0007669"/>
    <property type="project" value="UniProtKB-UniRule"/>
</dbReference>
<dbReference type="GO" id="GO:0006402">
    <property type="term" value="P:mRNA catabolic process"/>
    <property type="evidence" value="ECO:0007669"/>
    <property type="project" value="UniProtKB-UniRule"/>
</dbReference>
<dbReference type="GO" id="GO:0006396">
    <property type="term" value="P:RNA processing"/>
    <property type="evidence" value="ECO:0007669"/>
    <property type="project" value="InterPro"/>
</dbReference>
<dbReference type="CDD" id="cd02393">
    <property type="entry name" value="KH-I_PNPase"/>
    <property type="match status" value="1"/>
</dbReference>
<dbReference type="CDD" id="cd11363">
    <property type="entry name" value="RNase_PH_PNPase_1"/>
    <property type="match status" value="1"/>
</dbReference>
<dbReference type="CDD" id="cd11364">
    <property type="entry name" value="RNase_PH_PNPase_2"/>
    <property type="match status" value="1"/>
</dbReference>
<dbReference type="CDD" id="cd04472">
    <property type="entry name" value="S1_PNPase"/>
    <property type="match status" value="1"/>
</dbReference>
<dbReference type="FunFam" id="2.40.50.140:FF:000023">
    <property type="entry name" value="Polyribonucleotide nucleotidyltransferase"/>
    <property type="match status" value="1"/>
</dbReference>
<dbReference type="FunFam" id="3.30.1370.10:FF:000001">
    <property type="entry name" value="Polyribonucleotide nucleotidyltransferase"/>
    <property type="match status" value="1"/>
</dbReference>
<dbReference type="FunFam" id="3.30.230.70:FF:000001">
    <property type="entry name" value="Polyribonucleotide nucleotidyltransferase"/>
    <property type="match status" value="1"/>
</dbReference>
<dbReference type="FunFam" id="3.30.230.70:FF:000002">
    <property type="entry name" value="Polyribonucleotide nucleotidyltransferase"/>
    <property type="match status" value="1"/>
</dbReference>
<dbReference type="Gene3D" id="3.30.230.70">
    <property type="entry name" value="GHMP Kinase, N-terminal domain"/>
    <property type="match status" value="2"/>
</dbReference>
<dbReference type="Gene3D" id="3.30.1370.10">
    <property type="entry name" value="K Homology domain, type 1"/>
    <property type="match status" value="1"/>
</dbReference>
<dbReference type="Gene3D" id="2.40.50.140">
    <property type="entry name" value="Nucleic acid-binding proteins"/>
    <property type="match status" value="1"/>
</dbReference>
<dbReference type="HAMAP" id="MF_01595">
    <property type="entry name" value="PNPase"/>
    <property type="match status" value="1"/>
</dbReference>
<dbReference type="InterPro" id="IPR001247">
    <property type="entry name" value="ExoRNase_PH_dom1"/>
</dbReference>
<dbReference type="InterPro" id="IPR015847">
    <property type="entry name" value="ExoRNase_PH_dom2"/>
</dbReference>
<dbReference type="InterPro" id="IPR036345">
    <property type="entry name" value="ExoRNase_PH_dom2_sf"/>
</dbReference>
<dbReference type="InterPro" id="IPR004087">
    <property type="entry name" value="KH_dom"/>
</dbReference>
<dbReference type="InterPro" id="IPR004088">
    <property type="entry name" value="KH_dom_type_1"/>
</dbReference>
<dbReference type="InterPro" id="IPR036612">
    <property type="entry name" value="KH_dom_type_1_sf"/>
</dbReference>
<dbReference type="InterPro" id="IPR012340">
    <property type="entry name" value="NA-bd_OB-fold"/>
</dbReference>
<dbReference type="InterPro" id="IPR012162">
    <property type="entry name" value="PNPase"/>
</dbReference>
<dbReference type="InterPro" id="IPR027408">
    <property type="entry name" value="PNPase/RNase_PH_dom_sf"/>
</dbReference>
<dbReference type="InterPro" id="IPR015848">
    <property type="entry name" value="PNPase_PH_RNA-bd_bac/org-type"/>
</dbReference>
<dbReference type="InterPro" id="IPR036456">
    <property type="entry name" value="PNPase_PH_RNA-bd_sf"/>
</dbReference>
<dbReference type="InterPro" id="IPR020568">
    <property type="entry name" value="Ribosomal_Su5_D2-typ_SF"/>
</dbReference>
<dbReference type="InterPro" id="IPR003029">
    <property type="entry name" value="S1_domain"/>
</dbReference>
<dbReference type="NCBIfam" id="TIGR03591">
    <property type="entry name" value="polynuc_phos"/>
    <property type="match status" value="1"/>
</dbReference>
<dbReference type="NCBIfam" id="NF008805">
    <property type="entry name" value="PRK11824.1"/>
    <property type="match status" value="1"/>
</dbReference>
<dbReference type="PANTHER" id="PTHR11252">
    <property type="entry name" value="POLYRIBONUCLEOTIDE NUCLEOTIDYLTRANSFERASE"/>
    <property type="match status" value="1"/>
</dbReference>
<dbReference type="PANTHER" id="PTHR11252:SF0">
    <property type="entry name" value="POLYRIBONUCLEOTIDE NUCLEOTIDYLTRANSFERASE 1, MITOCHONDRIAL"/>
    <property type="match status" value="1"/>
</dbReference>
<dbReference type="Pfam" id="PF00013">
    <property type="entry name" value="KH_1"/>
    <property type="match status" value="1"/>
</dbReference>
<dbReference type="Pfam" id="PF03726">
    <property type="entry name" value="PNPase"/>
    <property type="match status" value="1"/>
</dbReference>
<dbReference type="Pfam" id="PF01138">
    <property type="entry name" value="RNase_PH"/>
    <property type="match status" value="2"/>
</dbReference>
<dbReference type="Pfam" id="PF03725">
    <property type="entry name" value="RNase_PH_C"/>
    <property type="match status" value="2"/>
</dbReference>
<dbReference type="Pfam" id="PF00575">
    <property type="entry name" value="S1"/>
    <property type="match status" value="1"/>
</dbReference>
<dbReference type="PIRSF" id="PIRSF005499">
    <property type="entry name" value="PNPase"/>
    <property type="match status" value="1"/>
</dbReference>
<dbReference type="SMART" id="SM00322">
    <property type="entry name" value="KH"/>
    <property type="match status" value="1"/>
</dbReference>
<dbReference type="SMART" id="SM00316">
    <property type="entry name" value="S1"/>
    <property type="match status" value="1"/>
</dbReference>
<dbReference type="SUPFAM" id="SSF54791">
    <property type="entry name" value="Eukaryotic type KH-domain (KH-domain type I)"/>
    <property type="match status" value="1"/>
</dbReference>
<dbReference type="SUPFAM" id="SSF50249">
    <property type="entry name" value="Nucleic acid-binding proteins"/>
    <property type="match status" value="1"/>
</dbReference>
<dbReference type="SUPFAM" id="SSF46915">
    <property type="entry name" value="Polynucleotide phosphorylase/guanosine pentaphosphate synthase (PNPase/GPSI), domain 3"/>
    <property type="match status" value="1"/>
</dbReference>
<dbReference type="SUPFAM" id="SSF55666">
    <property type="entry name" value="Ribonuclease PH domain 2-like"/>
    <property type="match status" value="2"/>
</dbReference>
<dbReference type="SUPFAM" id="SSF54211">
    <property type="entry name" value="Ribosomal protein S5 domain 2-like"/>
    <property type="match status" value="2"/>
</dbReference>
<dbReference type="PROSITE" id="PS50084">
    <property type="entry name" value="KH_TYPE_1"/>
    <property type="match status" value="1"/>
</dbReference>
<dbReference type="PROSITE" id="PS50126">
    <property type="entry name" value="S1"/>
    <property type="match status" value="1"/>
</dbReference>